<evidence type="ECO:0000255" key="1">
    <source>
        <dbReference type="HAMAP-Rule" id="MF_00185"/>
    </source>
</evidence>
<comment type="function">
    <text evidence="1">Catalyzes the transfer of a dimethylallyl group onto the adenine at position 37 in tRNAs that read codons beginning with uridine, leading to the formation of N6-(dimethylallyl)adenosine (i(6)A).</text>
</comment>
<comment type="catalytic activity">
    <reaction evidence="1">
        <text>adenosine(37) in tRNA + dimethylallyl diphosphate = N(6)-dimethylallyladenosine(37) in tRNA + diphosphate</text>
        <dbReference type="Rhea" id="RHEA:26482"/>
        <dbReference type="Rhea" id="RHEA-COMP:10162"/>
        <dbReference type="Rhea" id="RHEA-COMP:10375"/>
        <dbReference type="ChEBI" id="CHEBI:33019"/>
        <dbReference type="ChEBI" id="CHEBI:57623"/>
        <dbReference type="ChEBI" id="CHEBI:74411"/>
        <dbReference type="ChEBI" id="CHEBI:74415"/>
        <dbReference type="EC" id="2.5.1.75"/>
    </reaction>
</comment>
<comment type="cofactor">
    <cofactor evidence="1">
        <name>Mg(2+)</name>
        <dbReference type="ChEBI" id="CHEBI:18420"/>
    </cofactor>
</comment>
<comment type="subunit">
    <text evidence="1">Monomer.</text>
</comment>
<comment type="similarity">
    <text evidence="1">Belongs to the IPP transferase family.</text>
</comment>
<keyword id="KW-0067">ATP-binding</keyword>
<keyword id="KW-0460">Magnesium</keyword>
<keyword id="KW-0547">Nucleotide-binding</keyword>
<keyword id="KW-0808">Transferase</keyword>
<keyword id="KW-0819">tRNA processing</keyword>
<organism>
    <name type="scientific">Porphyromonas gingivalis (strain ATCC 33277 / DSM 20709 / CIP 103683 / JCM 12257 / NCTC 11834 / 2561)</name>
    <dbReference type="NCBI Taxonomy" id="431947"/>
    <lineage>
        <taxon>Bacteria</taxon>
        <taxon>Pseudomonadati</taxon>
        <taxon>Bacteroidota</taxon>
        <taxon>Bacteroidia</taxon>
        <taxon>Bacteroidales</taxon>
        <taxon>Porphyromonadaceae</taxon>
        <taxon>Porphyromonas</taxon>
    </lineage>
</organism>
<name>MIAA1_PORG3</name>
<accession>B2RKS4</accession>
<proteinExistence type="inferred from homology"/>
<feature type="chain" id="PRO_0000377267" description="tRNA dimethylallyltransferase 1">
    <location>
        <begin position="1"/>
        <end position="302"/>
    </location>
</feature>
<feature type="region of interest" description="Interaction with substrate tRNA" evidence="1">
    <location>
        <begin position="31"/>
        <end position="34"/>
    </location>
</feature>
<feature type="region of interest" description="Interaction with substrate tRNA" evidence="1">
    <location>
        <begin position="154"/>
        <end position="158"/>
    </location>
</feature>
<feature type="binding site" evidence="1">
    <location>
        <begin position="6"/>
        <end position="13"/>
    </location>
    <ligand>
        <name>ATP</name>
        <dbReference type="ChEBI" id="CHEBI:30616"/>
    </ligand>
</feature>
<feature type="binding site" evidence="1">
    <location>
        <begin position="8"/>
        <end position="13"/>
    </location>
    <ligand>
        <name>substrate</name>
    </ligand>
</feature>
<feature type="site" description="Interaction with substrate tRNA" evidence="1">
    <location>
        <position position="100"/>
    </location>
</feature>
<reference key="1">
    <citation type="journal article" date="2008" name="DNA Res.">
        <title>Determination of the genome sequence of Porphyromonas gingivalis strain ATCC 33277 and genomic comparison with strain W83 revealed extensive genome rearrangements in P. gingivalis.</title>
        <authorList>
            <person name="Naito M."/>
            <person name="Hirakawa H."/>
            <person name="Yamashita A."/>
            <person name="Ohara N."/>
            <person name="Shoji M."/>
            <person name="Yukitake H."/>
            <person name="Nakayama K."/>
            <person name="Toh H."/>
            <person name="Yoshimura F."/>
            <person name="Kuhara S."/>
            <person name="Hattori M."/>
            <person name="Hayashi T."/>
            <person name="Nakayama K."/>
        </authorList>
    </citation>
    <scope>NUCLEOTIDE SEQUENCE [LARGE SCALE GENOMIC DNA]</scope>
    <source>
        <strain>ATCC 33277 / DSM 20709 / CIP 103683 / JCM 12257 / NCTC 11834 / 2561</strain>
    </source>
</reference>
<sequence>MITILGPTACGKTRLAVSLAYRLGTEIISADSRQIYRGMDIGTGKDLADYQVGGTTIPCHLIDIRPAGDKYNLFAYQHDFHQAYASILARGMDPILCGGTGMYIEAVLKGYHLPDVPPNPTLRDRLQGKSLTELTLILAAYGPLHNKTDVDSAQRAIRAIEIAEYIKNNPAESTEFPPIDSLIIGLDLDRDTRRKRITDRLHARMHEGMIEEVKGLLDSGIPADDLIYYGLEYKFVTLYLTGQTDYESMFTGLETAIHQFAKRQMTWFRGMERRGFLIHWIDALLPADEQCEAVMKLYTANG</sequence>
<protein>
    <recommendedName>
        <fullName evidence="1">tRNA dimethylallyltransferase 1</fullName>
        <ecNumber evidence="1">2.5.1.75</ecNumber>
    </recommendedName>
    <alternativeName>
        <fullName evidence="1">Dimethylallyl diphosphate:tRNA dimethylallyltransferase 1</fullName>
        <shortName evidence="1">DMAPP:tRNA dimethylallyltransferase 1</shortName>
        <shortName evidence="1">DMATase 1</shortName>
    </alternativeName>
    <alternativeName>
        <fullName evidence="1">Isopentenyl-diphosphate:tRNA isopentenyltransferase 1</fullName>
        <shortName evidence="1">IPP transferase 1</shortName>
        <shortName evidence="1">IPPT 1</shortName>
        <shortName evidence="1">IPTase 1</shortName>
    </alternativeName>
</protein>
<dbReference type="EC" id="2.5.1.75" evidence="1"/>
<dbReference type="EMBL" id="AP009380">
    <property type="protein sequence ID" value="BAG33969.1"/>
    <property type="molecule type" value="Genomic_DNA"/>
</dbReference>
<dbReference type="RefSeq" id="WP_012458279.1">
    <property type="nucleotide sequence ID" value="NC_010729.1"/>
</dbReference>
<dbReference type="SMR" id="B2RKS4"/>
<dbReference type="GeneID" id="29256634"/>
<dbReference type="KEGG" id="pgn:PGN_1450"/>
<dbReference type="eggNOG" id="COG0324">
    <property type="taxonomic scope" value="Bacteria"/>
</dbReference>
<dbReference type="HOGENOM" id="CLU_032616_0_1_10"/>
<dbReference type="OrthoDB" id="9776390at2"/>
<dbReference type="BioCyc" id="PGIN431947:G1G2V-1652-MONOMER"/>
<dbReference type="Proteomes" id="UP000008842">
    <property type="component" value="Chromosome"/>
</dbReference>
<dbReference type="GO" id="GO:0005524">
    <property type="term" value="F:ATP binding"/>
    <property type="evidence" value="ECO:0007669"/>
    <property type="project" value="UniProtKB-UniRule"/>
</dbReference>
<dbReference type="GO" id="GO:0052381">
    <property type="term" value="F:tRNA dimethylallyltransferase activity"/>
    <property type="evidence" value="ECO:0007669"/>
    <property type="project" value="UniProtKB-UniRule"/>
</dbReference>
<dbReference type="GO" id="GO:0006400">
    <property type="term" value="P:tRNA modification"/>
    <property type="evidence" value="ECO:0007669"/>
    <property type="project" value="TreeGrafter"/>
</dbReference>
<dbReference type="Gene3D" id="3.40.50.300">
    <property type="entry name" value="P-loop containing nucleotide triphosphate hydrolases"/>
    <property type="match status" value="2"/>
</dbReference>
<dbReference type="HAMAP" id="MF_00185">
    <property type="entry name" value="IPP_trans"/>
    <property type="match status" value="1"/>
</dbReference>
<dbReference type="InterPro" id="IPR039657">
    <property type="entry name" value="Dimethylallyltransferase"/>
</dbReference>
<dbReference type="InterPro" id="IPR018022">
    <property type="entry name" value="IPT"/>
</dbReference>
<dbReference type="InterPro" id="IPR027417">
    <property type="entry name" value="P-loop_NTPase"/>
</dbReference>
<dbReference type="NCBIfam" id="TIGR00174">
    <property type="entry name" value="miaA"/>
    <property type="match status" value="1"/>
</dbReference>
<dbReference type="PANTHER" id="PTHR11088">
    <property type="entry name" value="TRNA DIMETHYLALLYLTRANSFERASE"/>
    <property type="match status" value="1"/>
</dbReference>
<dbReference type="PANTHER" id="PTHR11088:SF60">
    <property type="entry name" value="TRNA DIMETHYLALLYLTRANSFERASE"/>
    <property type="match status" value="1"/>
</dbReference>
<dbReference type="Pfam" id="PF01715">
    <property type="entry name" value="IPPT"/>
    <property type="match status" value="1"/>
</dbReference>
<dbReference type="SUPFAM" id="SSF52540">
    <property type="entry name" value="P-loop containing nucleoside triphosphate hydrolases"/>
    <property type="match status" value="1"/>
</dbReference>
<gene>
    <name evidence="1" type="primary">miaA1</name>
    <name type="ordered locus">PGN_1450</name>
</gene>